<dbReference type="EMBL" id="CR954246">
    <property type="protein sequence ID" value="CAI86832.1"/>
    <property type="molecule type" value="Genomic_DNA"/>
</dbReference>
<dbReference type="SMR" id="Q3IH67"/>
<dbReference type="STRING" id="326442.PSHAa1760"/>
<dbReference type="KEGG" id="pha:PSHAa1760"/>
<dbReference type="PATRIC" id="fig|326442.8.peg.1708"/>
<dbReference type="eggNOG" id="COG2371">
    <property type="taxonomic scope" value="Bacteria"/>
</dbReference>
<dbReference type="HOGENOM" id="CLU_093757_2_0_6"/>
<dbReference type="BioCyc" id="PHAL326442:PSHA_RS08640-MONOMER"/>
<dbReference type="Proteomes" id="UP000006843">
    <property type="component" value="Chromosome I"/>
</dbReference>
<dbReference type="GO" id="GO:0005737">
    <property type="term" value="C:cytoplasm"/>
    <property type="evidence" value="ECO:0007669"/>
    <property type="project" value="UniProtKB-SubCell"/>
</dbReference>
<dbReference type="GO" id="GO:0016151">
    <property type="term" value="F:nickel cation binding"/>
    <property type="evidence" value="ECO:0007669"/>
    <property type="project" value="UniProtKB-UniRule"/>
</dbReference>
<dbReference type="GO" id="GO:0051082">
    <property type="term" value="F:unfolded protein binding"/>
    <property type="evidence" value="ECO:0007669"/>
    <property type="project" value="UniProtKB-UniRule"/>
</dbReference>
<dbReference type="GO" id="GO:0006457">
    <property type="term" value="P:protein folding"/>
    <property type="evidence" value="ECO:0007669"/>
    <property type="project" value="InterPro"/>
</dbReference>
<dbReference type="GO" id="GO:0065003">
    <property type="term" value="P:protein-containing complex assembly"/>
    <property type="evidence" value="ECO:0007669"/>
    <property type="project" value="InterPro"/>
</dbReference>
<dbReference type="GO" id="GO:0019627">
    <property type="term" value="P:urea metabolic process"/>
    <property type="evidence" value="ECO:0007669"/>
    <property type="project" value="InterPro"/>
</dbReference>
<dbReference type="Gene3D" id="2.60.260.20">
    <property type="entry name" value="Urease metallochaperone UreE, N-terminal domain"/>
    <property type="match status" value="1"/>
</dbReference>
<dbReference type="Gene3D" id="3.30.70.790">
    <property type="entry name" value="UreE, C-terminal domain"/>
    <property type="match status" value="1"/>
</dbReference>
<dbReference type="HAMAP" id="MF_00822">
    <property type="entry name" value="UreE"/>
    <property type="match status" value="1"/>
</dbReference>
<dbReference type="InterPro" id="IPR012406">
    <property type="entry name" value="UreE"/>
</dbReference>
<dbReference type="InterPro" id="IPR007864">
    <property type="entry name" value="UreE_C_dom"/>
</dbReference>
<dbReference type="InterPro" id="IPR004029">
    <property type="entry name" value="UreE_N"/>
</dbReference>
<dbReference type="InterPro" id="IPR036118">
    <property type="entry name" value="UreE_N_sf"/>
</dbReference>
<dbReference type="NCBIfam" id="NF009751">
    <property type="entry name" value="PRK13261.1-1"/>
    <property type="match status" value="1"/>
</dbReference>
<dbReference type="Pfam" id="PF05194">
    <property type="entry name" value="UreE_C"/>
    <property type="match status" value="1"/>
</dbReference>
<dbReference type="Pfam" id="PF02814">
    <property type="entry name" value="UreE_N"/>
    <property type="match status" value="1"/>
</dbReference>
<dbReference type="PIRSF" id="PIRSF036402">
    <property type="entry name" value="Ureas_acces_UreE"/>
    <property type="match status" value="1"/>
</dbReference>
<dbReference type="SMART" id="SM00988">
    <property type="entry name" value="UreE_N"/>
    <property type="match status" value="1"/>
</dbReference>
<dbReference type="SUPFAM" id="SSF69737">
    <property type="entry name" value="Urease metallochaperone UreE, C-terminal domain"/>
    <property type="match status" value="1"/>
</dbReference>
<dbReference type="SUPFAM" id="SSF69287">
    <property type="entry name" value="Urease metallochaperone UreE, N-terminal domain"/>
    <property type="match status" value="1"/>
</dbReference>
<evidence type="ECO:0000255" key="1">
    <source>
        <dbReference type="HAMAP-Rule" id="MF_00822"/>
    </source>
</evidence>
<evidence type="ECO:0000256" key="2">
    <source>
        <dbReference type="SAM" id="MobiDB-lite"/>
    </source>
</evidence>
<proteinExistence type="inferred from homology"/>
<keyword id="KW-0143">Chaperone</keyword>
<keyword id="KW-0963">Cytoplasm</keyword>
<keyword id="KW-0533">Nickel</keyword>
<keyword id="KW-0996">Nickel insertion</keyword>
<keyword id="KW-1185">Reference proteome</keyword>
<sequence length="170" mass="18753">MFELTKRIDSNTQDAVFDTLTLPYELRIRGRLKAVTDNGHDVGLFLDRGPVLRNGDLLRASSGEVFSISAADEPVTTAYIENGLPLARLCYHLGNRHVSLAIGVDADGRHWIRFPPDHVLEELAILLGAQLTHHQAPFDPESGAYAHAGREQSHAHSHEHSHADGHTHAH</sequence>
<organism>
    <name type="scientific">Pseudoalteromonas translucida (strain TAC 125)</name>
    <dbReference type="NCBI Taxonomy" id="326442"/>
    <lineage>
        <taxon>Bacteria</taxon>
        <taxon>Pseudomonadati</taxon>
        <taxon>Pseudomonadota</taxon>
        <taxon>Gammaproteobacteria</taxon>
        <taxon>Alteromonadales</taxon>
        <taxon>Pseudoalteromonadaceae</taxon>
        <taxon>Pseudoalteromonas</taxon>
    </lineage>
</organism>
<reference key="1">
    <citation type="journal article" date="2005" name="Genome Res.">
        <title>Coping with cold: the genome of the versatile marine Antarctica bacterium Pseudoalteromonas haloplanktis TAC125.</title>
        <authorList>
            <person name="Medigue C."/>
            <person name="Krin E."/>
            <person name="Pascal G."/>
            <person name="Barbe V."/>
            <person name="Bernsel A."/>
            <person name="Bertin P.N."/>
            <person name="Cheung F."/>
            <person name="Cruveiller S."/>
            <person name="D'Amico S."/>
            <person name="Duilio A."/>
            <person name="Fang G."/>
            <person name="Feller G."/>
            <person name="Ho C."/>
            <person name="Mangenot S."/>
            <person name="Marino G."/>
            <person name="Nilsson J."/>
            <person name="Parrilli E."/>
            <person name="Rocha E.P.C."/>
            <person name="Rouy Z."/>
            <person name="Sekowska A."/>
            <person name="Tutino M.L."/>
            <person name="Vallenet D."/>
            <person name="von Heijne G."/>
            <person name="Danchin A."/>
        </authorList>
    </citation>
    <scope>NUCLEOTIDE SEQUENCE [LARGE SCALE GENOMIC DNA]</scope>
    <source>
        <strain>TAC 125</strain>
    </source>
</reference>
<protein>
    <recommendedName>
        <fullName evidence="1">Urease accessory protein UreE</fullName>
    </recommendedName>
</protein>
<name>UREE_PSET1</name>
<feature type="chain" id="PRO_1000083905" description="Urease accessory protein UreE">
    <location>
        <begin position="1"/>
        <end position="170"/>
    </location>
</feature>
<feature type="region of interest" description="Disordered" evidence="2">
    <location>
        <begin position="137"/>
        <end position="170"/>
    </location>
</feature>
<feature type="compositionally biased region" description="Basic and acidic residues" evidence="2">
    <location>
        <begin position="148"/>
        <end position="170"/>
    </location>
</feature>
<comment type="function">
    <text evidence="1">Involved in urease metallocenter assembly. Binds nickel. Probably functions as a nickel donor during metallocenter assembly.</text>
</comment>
<comment type="subcellular location">
    <subcellularLocation>
        <location evidence="1">Cytoplasm</location>
    </subcellularLocation>
</comment>
<comment type="similarity">
    <text evidence="1">Belongs to the UreE family.</text>
</comment>
<accession>Q3IH67</accession>
<gene>
    <name evidence="1" type="primary">ureE</name>
    <name type="ordered locus">PSHAa1760</name>
</gene>